<evidence type="ECO:0000255" key="1">
    <source>
        <dbReference type="HAMAP-Rule" id="MF_01161"/>
    </source>
</evidence>
<name>TILS_RHILO</name>
<dbReference type="EC" id="6.3.4.19" evidence="1"/>
<dbReference type="EMBL" id="BA000012">
    <property type="protein sequence ID" value="BAB50680.1"/>
    <property type="molecule type" value="Genomic_DNA"/>
</dbReference>
<dbReference type="RefSeq" id="WP_010912023.1">
    <property type="nucleotide sequence ID" value="NC_002678.2"/>
</dbReference>
<dbReference type="SMR" id="Q98F87"/>
<dbReference type="KEGG" id="mlo:mll3884"/>
<dbReference type="PATRIC" id="fig|266835.9.peg.3091"/>
<dbReference type="eggNOG" id="COG0037">
    <property type="taxonomic scope" value="Bacteria"/>
</dbReference>
<dbReference type="HOGENOM" id="CLU_018869_3_3_5"/>
<dbReference type="Proteomes" id="UP000000552">
    <property type="component" value="Chromosome"/>
</dbReference>
<dbReference type="GO" id="GO:0005737">
    <property type="term" value="C:cytoplasm"/>
    <property type="evidence" value="ECO:0007669"/>
    <property type="project" value="UniProtKB-SubCell"/>
</dbReference>
<dbReference type="GO" id="GO:0005524">
    <property type="term" value="F:ATP binding"/>
    <property type="evidence" value="ECO:0007669"/>
    <property type="project" value="UniProtKB-UniRule"/>
</dbReference>
<dbReference type="GO" id="GO:0032267">
    <property type="term" value="F:tRNA(Ile)-lysidine synthase activity"/>
    <property type="evidence" value="ECO:0007669"/>
    <property type="project" value="UniProtKB-EC"/>
</dbReference>
<dbReference type="GO" id="GO:0006400">
    <property type="term" value="P:tRNA modification"/>
    <property type="evidence" value="ECO:0007669"/>
    <property type="project" value="UniProtKB-UniRule"/>
</dbReference>
<dbReference type="CDD" id="cd01992">
    <property type="entry name" value="TilS_N"/>
    <property type="match status" value="1"/>
</dbReference>
<dbReference type="Gene3D" id="3.40.50.620">
    <property type="entry name" value="HUPs"/>
    <property type="match status" value="1"/>
</dbReference>
<dbReference type="HAMAP" id="MF_01161">
    <property type="entry name" value="tRNA_Ile_lys_synt"/>
    <property type="match status" value="1"/>
</dbReference>
<dbReference type="InterPro" id="IPR014729">
    <property type="entry name" value="Rossmann-like_a/b/a_fold"/>
</dbReference>
<dbReference type="InterPro" id="IPR011063">
    <property type="entry name" value="TilS/TtcA_N"/>
</dbReference>
<dbReference type="InterPro" id="IPR012094">
    <property type="entry name" value="tRNA_Ile_lys_synt"/>
</dbReference>
<dbReference type="InterPro" id="IPR012795">
    <property type="entry name" value="tRNA_Ile_lys_synt_N"/>
</dbReference>
<dbReference type="NCBIfam" id="TIGR02432">
    <property type="entry name" value="lysidine_TilS_N"/>
    <property type="match status" value="1"/>
</dbReference>
<dbReference type="PANTHER" id="PTHR43033">
    <property type="entry name" value="TRNA(ILE)-LYSIDINE SYNTHASE-RELATED"/>
    <property type="match status" value="1"/>
</dbReference>
<dbReference type="PANTHER" id="PTHR43033:SF1">
    <property type="entry name" value="TRNA(ILE)-LYSIDINE SYNTHASE-RELATED"/>
    <property type="match status" value="1"/>
</dbReference>
<dbReference type="Pfam" id="PF01171">
    <property type="entry name" value="ATP_bind_3"/>
    <property type="match status" value="1"/>
</dbReference>
<dbReference type="SUPFAM" id="SSF52402">
    <property type="entry name" value="Adenine nucleotide alpha hydrolases-like"/>
    <property type="match status" value="1"/>
</dbReference>
<keyword id="KW-0067">ATP-binding</keyword>
<keyword id="KW-0963">Cytoplasm</keyword>
<keyword id="KW-0436">Ligase</keyword>
<keyword id="KW-0547">Nucleotide-binding</keyword>
<keyword id="KW-0819">tRNA processing</keyword>
<accession>Q98F87</accession>
<sequence length="454" mass="48158">MLDTEPDLSTRLFSHIDFTHGAVAAVSGGSDSTALLLLLKHHFDRTGSSAKLLAVTIDHGLRQGSAAEAQAVAKLCAERGIAHRTLTWTGRKPSTGLPAAARDARYHLLAEAARAEGIGLIVTGHTADDQAETVLMRHARDRELADLAGRGLAGMAPATLYDWREWIVRPLLGTRRSALRDFLRREHVGWAEDPTNIDEAFERPRVRAALAGESAGHMENTLRLAGQAAVERGQLGASAANLIRRIASQPSTGLIRLDPALLIADDQAAIYALRILLATAGGAAFLPDQARSAALFVRLKAGFLCATLSRTVVDFRHAGLFLRREARGLPPAATAVDNTIWDGRRHITLNDMSGALLIAPLGAAAARRLAIDDGETPASLIRAALAAEPTLLQAFENLGLPQGEPRLPVFAARPVVSPFARFLPSFDLAPARAVAELIGASPLPASPLGGHSAD</sequence>
<proteinExistence type="inferred from homology"/>
<organism>
    <name type="scientific">Mesorhizobium japonicum (strain LMG 29417 / CECT 9101 / MAFF 303099)</name>
    <name type="common">Mesorhizobium loti (strain MAFF 303099)</name>
    <dbReference type="NCBI Taxonomy" id="266835"/>
    <lineage>
        <taxon>Bacteria</taxon>
        <taxon>Pseudomonadati</taxon>
        <taxon>Pseudomonadota</taxon>
        <taxon>Alphaproteobacteria</taxon>
        <taxon>Hyphomicrobiales</taxon>
        <taxon>Phyllobacteriaceae</taxon>
        <taxon>Mesorhizobium</taxon>
    </lineage>
</organism>
<reference key="1">
    <citation type="journal article" date="2000" name="DNA Res.">
        <title>Complete genome structure of the nitrogen-fixing symbiotic bacterium Mesorhizobium loti.</title>
        <authorList>
            <person name="Kaneko T."/>
            <person name="Nakamura Y."/>
            <person name="Sato S."/>
            <person name="Asamizu E."/>
            <person name="Kato T."/>
            <person name="Sasamoto S."/>
            <person name="Watanabe A."/>
            <person name="Idesawa K."/>
            <person name="Ishikawa A."/>
            <person name="Kawashima K."/>
            <person name="Kimura T."/>
            <person name="Kishida Y."/>
            <person name="Kiyokawa C."/>
            <person name="Kohara M."/>
            <person name="Matsumoto M."/>
            <person name="Matsuno A."/>
            <person name="Mochizuki Y."/>
            <person name="Nakayama S."/>
            <person name="Nakazaki N."/>
            <person name="Shimpo S."/>
            <person name="Sugimoto M."/>
            <person name="Takeuchi C."/>
            <person name="Yamada M."/>
            <person name="Tabata S."/>
        </authorList>
    </citation>
    <scope>NUCLEOTIDE SEQUENCE [LARGE SCALE GENOMIC DNA]</scope>
    <source>
        <strain>LMG 29417 / CECT 9101 / MAFF 303099</strain>
    </source>
</reference>
<gene>
    <name evidence="1" type="primary">tilS</name>
    <name type="ordered locus">mll3884</name>
</gene>
<comment type="function">
    <text evidence="1">Ligates lysine onto the cytidine present at position 34 of the AUA codon-specific tRNA(Ile) that contains the anticodon CAU, in an ATP-dependent manner. Cytidine is converted to lysidine, thus changing the amino acid specificity of the tRNA from methionine to isoleucine.</text>
</comment>
<comment type="catalytic activity">
    <reaction evidence="1">
        <text>cytidine(34) in tRNA(Ile2) + L-lysine + ATP = lysidine(34) in tRNA(Ile2) + AMP + diphosphate + H(+)</text>
        <dbReference type="Rhea" id="RHEA:43744"/>
        <dbReference type="Rhea" id="RHEA-COMP:10625"/>
        <dbReference type="Rhea" id="RHEA-COMP:10670"/>
        <dbReference type="ChEBI" id="CHEBI:15378"/>
        <dbReference type="ChEBI" id="CHEBI:30616"/>
        <dbReference type="ChEBI" id="CHEBI:32551"/>
        <dbReference type="ChEBI" id="CHEBI:33019"/>
        <dbReference type="ChEBI" id="CHEBI:82748"/>
        <dbReference type="ChEBI" id="CHEBI:83665"/>
        <dbReference type="ChEBI" id="CHEBI:456215"/>
        <dbReference type="EC" id="6.3.4.19"/>
    </reaction>
</comment>
<comment type="subcellular location">
    <subcellularLocation>
        <location evidence="1">Cytoplasm</location>
    </subcellularLocation>
</comment>
<comment type="domain">
    <text>The N-terminal region contains the highly conserved SGGXDS motif, predicted to be a P-loop motif involved in ATP binding.</text>
</comment>
<comment type="similarity">
    <text evidence="1">Belongs to the tRNA(Ile)-lysidine synthase family.</text>
</comment>
<feature type="chain" id="PRO_0000181752" description="tRNA(Ile)-lysidine synthase">
    <location>
        <begin position="1"/>
        <end position="454"/>
    </location>
</feature>
<feature type="binding site" evidence="1">
    <location>
        <begin position="27"/>
        <end position="32"/>
    </location>
    <ligand>
        <name>ATP</name>
        <dbReference type="ChEBI" id="CHEBI:30616"/>
    </ligand>
</feature>
<protein>
    <recommendedName>
        <fullName evidence="1">tRNA(Ile)-lysidine synthase</fullName>
        <ecNumber evidence="1">6.3.4.19</ecNumber>
    </recommendedName>
    <alternativeName>
        <fullName evidence="1">tRNA(Ile)-2-lysyl-cytidine synthase</fullName>
    </alternativeName>
    <alternativeName>
        <fullName evidence="1">tRNA(Ile)-lysidine synthetase</fullName>
    </alternativeName>
</protein>